<organism>
    <name type="scientific">Desulfurococcus amylolyticus (strain DSM 18924 / JCM 16383 / VKM B-2413 / 1221n)</name>
    <name type="common">Desulfurococcus kamchatkensis</name>
    <dbReference type="NCBI Taxonomy" id="490899"/>
    <lineage>
        <taxon>Archaea</taxon>
        <taxon>Thermoproteota</taxon>
        <taxon>Thermoprotei</taxon>
        <taxon>Desulfurococcales</taxon>
        <taxon>Desulfurococcaceae</taxon>
        <taxon>Desulfurococcus</taxon>
    </lineage>
</organism>
<proteinExistence type="inferred from homology"/>
<feature type="chain" id="PRO_1000146605" description="Large ribosomal subunit protein eL37">
    <location>
        <begin position="1"/>
        <end position="62"/>
    </location>
</feature>
<feature type="zinc finger region" description="C4-type" evidence="1">
    <location>
        <begin position="20"/>
        <end position="38"/>
    </location>
</feature>
<feature type="binding site" evidence="1">
    <location>
        <position position="20"/>
    </location>
    <ligand>
        <name>Zn(2+)</name>
        <dbReference type="ChEBI" id="CHEBI:29105"/>
    </ligand>
</feature>
<feature type="binding site" evidence="1">
    <location>
        <position position="23"/>
    </location>
    <ligand>
        <name>Zn(2+)</name>
        <dbReference type="ChEBI" id="CHEBI:29105"/>
    </ligand>
</feature>
<feature type="binding site" evidence="1">
    <location>
        <position position="35"/>
    </location>
    <ligand>
        <name>Zn(2+)</name>
        <dbReference type="ChEBI" id="CHEBI:29105"/>
    </ligand>
</feature>
<feature type="binding site" evidence="1">
    <location>
        <position position="38"/>
    </location>
    <ligand>
        <name>Zn(2+)</name>
        <dbReference type="ChEBI" id="CHEBI:29105"/>
    </ligand>
</feature>
<name>RL37_DESA1</name>
<gene>
    <name evidence="1" type="primary">rpl37e</name>
    <name type="ordered locus">DKAM_1293</name>
</gene>
<protein>
    <recommendedName>
        <fullName evidence="1">Large ribosomal subunit protein eL37</fullName>
    </recommendedName>
    <alternativeName>
        <fullName evidence="2">50S ribosomal protein L37e</fullName>
    </alternativeName>
</protein>
<accession>B8D688</accession>
<keyword id="KW-0479">Metal-binding</keyword>
<keyword id="KW-0687">Ribonucleoprotein</keyword>
<keyword id="KW-0689">Ribosomal protein</keyword>
<keyword id="KW-0694">RNA-binding</keyword>
<keyword id="KW-0699">rRNA-binding</keyword>
<keyword id="KW-0862">Zinc</keyword>
<keyword id="KW-0863">Zinc-finger</keyword>
<dbReference type="EMBL" id="CP001140">
    <property type="protein sequence ID" value="ACL11619.1"/>
    <property type="molecule type" value="Genomic_DNA"/>
</dbReference>
<dbReference type="RefSeq" id="WP_012608960.1">
    <property type="nucleotide sequence ID" value="NC_011766.1"/>
</dbReference>
<dbReference type="SMR" id="B8D688"/>
<dbReference type="STRING" id="490899.DKAM_1293"/>
<dbReference type="GeneID" id="7171351"/>
<dbReference type="KEGG" id="dka:DKAM_1293"/>
<dbReference type="eggNOG" id="arCOG04126">
    <property type="taxonomic scope" value="Archaea"/>
</dbReference>
<dbReference type="HOGENOM" id="CLU_208825_0_0_2"/>
<dbReference type="Proteomes" id="UP000006903">
    <property type="component" value="Chromosome"/>
</dbReference>
<dbReference type="GO" id="GO:0022625">
    <property type="term" value="C:cytosolic large ribosomal subunit"/>
    <property type="evidence" value="ECO:0007669"/>
    <property type="project" value="TreeGrafter"/>
</dbReference>
<dbReference type="GO" id="GO:0019843">
    <property type="term" value="F:rRNA binding"/>
    <property type="evidence" value="ECO:0007669"/>
    <property type="project" value="UniProtKB-KW"/>
</dbReference>
<dbReference type="GO" id="GO:0003735">
    <property type="term" value="F:structural constituent of ribosome"/>
    <property type="evidence" value="ECO:0007669"/>
    <property type="project" value="InterPro"/>
</dbReference>
<dbReference type="GO" id="GO:0008270">
    <property type="term" value="F:zinc ion binding"/>
    <property type="evidence" value="ECO:0007669"/>
    <property type="project" value="UniProtKB-UniRule"/>
</dbReference>
<dbReference type="GO" id="GO:0006412">
    <property type="term" value="P:translation"/>
    <property type="evidence" value="ECO:0007669"/>
    <property type="project" value="UniProtKB-UniRule"/>
</dbReference>
<dbReference type="FunFam" id="2.20.25.30:FF:000003">
    <property type="entry name" value="50S ribosomal protein L37e"/>
    <property type="match status" value="1"/>
</dbReference>
<dbReference type="Gene3D" id="2.20.25.30">
    <property type="match status" value="1"/>
</dbReference>
<dbReference type="HAMAP" id="MF_00547">
    <property type="entry name" value="Ribosomal_eL37"/>
    <property type="match status" value="1"/>
</dbReference>
<dbReference type="InterPro" id="IPR001569">
    <property type="entry name" value="Ribosomal_eL37"/>
</dbReference>
<dbReference type="InterPro" id="IPR011331">
    <property type="entry name" value="Ribosomal_eL37/eL43"/>
</dbReference>
<dbReference type="InterPro" id="IPR018267">
    <property type="entry name" value="Ribosomal_eL37_CS"/>
</dbReference>
<dbReference type="InterPro" id="IPR011332">
    <property type="entry name" value="Ribosomal_zn-bd"/>
</dbReference>
<dbReference type="NCBIfam" id="NF003214">
    <property type="entry name" value="PRK04179.1"/>
    <property type="match status" value="1"/>
</dbReference>
<dbReference type="PANTHER" id="PTHR10768">
    <property type="entry name" value="60S RIBOSOMAL PROTEIN L37"/>
    <property type="match status" value="1"/>
</dbReference>
<dbReference type="PANTHER" id="PTHR10768:SF0">
    <property type="entry name" value="RIBOSOMAL PROTEIN L37"/>
    <property type="match status" value="1"/>
</dbReference>
<dbReference type="Pfam" id="PF01907">
    <property type="entry name" value="Ribosomal_L37e"/>
    <property type="match status" value="1"/>
</dbReference>
<dbReference type="SUPFAM" id="SSF57829">
    <property type="entry name" value="Zn-binding ribosomal proteins"/>
    <property type="match status" value="1"/>
</dbReference>
<dbReference type="PROSITE" id="PS01077">
    <property type="entry name" value="RIBOSOMAL_L37E"/>
    <property type="match status" value="1"/>
</dbReference>
<sequence>MVKGTTSMGKHGRSKTHIRCRRCGRHSFNVAKGYCAACGFGRSKRIRHYNWANKKVNRIRIV</sequence>
<evidence type="ECO:0000255" key="1">
    <source>
        <dbReference type="HAMAP-Rule" id="MF_00547"/>
    </source>
</evidence>
<evidence type="ECO:0000305" key="2"/>
<reference key="1">
    <citation type="journal article" date="2009" name="J. Bacteriol.">
        <title>Complete genome sequence of the anaerobic, protein-degrading hyperthermophilic crenarchaeon Desulfurococcus kamchatkensis.</title>
        <authorList>
            <person name="Ravin N.V."/>
            <person name="Mardanov A.V."/>
            <person name="Beletsky A.V."/>
            <person name="Kublanov I.V."/>
            <person name="Kolganova T.V."/>
            <person name="Lebedinsky A.V."/>
            <person name="Chernyh N.A."/>
            <person name="Bonch-Osmolovskaya E.A."/>
            <person name="Skryabin K.G."/>
        </authorList>
    </citation>
    <scope>NUCLEOTIDE SEQUENCE [LARGE SCALE GENOMIC DNA]</scope>
    <source>
        <strain>DSM 18924 / JCM 16383 / VKM B-2413 / 1221n</strain>
    </source>
</reference>
<comment type="function">
    <text evidence="1">Binds to the 23S rRNA.</text>
</comment>
<comment type="cofactor">
    <cofactor evidence="1">
        <name>Zn(2+)</name>
        <dbReference type="ChEBI" id="CHEBI:29105"/>
    </cofactor>
    <text evidence="1">Binds 1 zinc ion per subunit.</text>
</comment>
<comment type="similarity">
    <text evidence="1">Belongs to the eukaryotic ribosomal protein eL37 family.</text>
</comment>